<sequence length="467" mass="51450">MTSNPPDLRPDLAPKPTFGTAPRPDQPTLGMVSLGCPKALVDSERILTRLRAEGYGISADYAGADAVIVNTCGFLDSAKAESLEAIGEALKENGKVIVTGCLGAEPDYIREHHPRILAVTGPHQYEQVLDAVHAAVPPSPDPFVDLLPATGVSLTPRHFSYLKISEGCNHKCKFCIIPDMRGKLASRPAHAVLREAEKLVTAGVRELLVISQDTSAYGLDRKYDVNPWKDGEVRSHITDLSRALGELAPADQLWVRLHYVYPYPHVRELIPLMADPENAVLPYLDIPFQHAHPDVLRRMARPAAAAKTLDEIRAWRAICPDITLRSTFIVGYPGETEAEFQHLLDWMDEAQLDRVGCFKYENVDGARSNDLPDHVAEEVKQNRWERFMEKAQAISEAKLASKVGQTLQVIVDEIDEDGIATCRTKADAPEIDGNLFIDEGTANLSVGDLVTVEVDEAGEYDLWGALR</sequence>
<name>RIMO_RUEST</name>
<proteinExistence type="inferred from homology"/>
<accession>Q1GIY4</accession>
<keyword id="KW-0004">4Fe-4S</keyword>
<keyword id="KW-0963">Cytoplasm</keyword>
<keyword id="KW-0408">Iron</keyword>
<keyword id="KW-0411">Iron-sulfur</keyword>
<keyword id="KW-0479">Metal-binding</keyword>
<keyword id="KW-1185">Reference proteome</keyword>
<keyword id="KW-0949">S-adenosyl-L-methionine</keyword>
<keyword id="KW-0808">Transferase</keyword>
<evidence type="ECO:0000255" key="1">
    <source>
        <dbReference type="HAMAP-Rule" id="MF_01865"/>
    </source>
</evidence>
<evidence type="ECO:0000255" key="2">
    <source>
        <dbReference type="PROSITE-ProRule" id="PRU01266"/>
    </source>
</evidence>
<evidence type="ECO:0000256" key="3">
    <source>
        <dbReference type="SAM" id="MobiDB-lite"/>
    </source>
</evidence>
<comment type="function">
    <text evidence="1">Catalyzes the methylthiolation of an aspartic acid residue of ribosomal protein uS12.</text>
</comment>
<comment type="catalytic activity">
    <reaction evidence="1">
        <text>L-aspartate(89)-[ribosomal protein uS12]-hydrogen + (sulfur carrier)-SH + AH2 + 2 S-adenosyl-L-methionine = 3-methylsulfanyl-L-aspartate(89)-[ribosomal protein uS12]-hydrogen + (sulfur carrier)-H + 5'-deoxyadenosine + L-methionine + A + S-adenosyl-L-homocysteine + 2 H(+)</text>
        <dbReference type="Rhea" id="RHEA:37087"/>
        <dbReference type="Rhea" id="RHEA-COMP:10460"/>
        <dbReference type="Rhea" id="RHEA-COMP:10461"/>
        <dbReference type="Rhea" id="RHEA-COMP:14737"/>
        <dbReference type="Rhea" id="RHEA-COMP:14739"/>
        <dbReference type="ChEBI" id="CHEBI:13193"/>
        <dbReference type="ChEBI" id="CHEBI:15378"/>
        <dbReference type="ChEBI" id="CHEBI:17319"/>
        <dbReference type="ChEBI" id="CHEBI:17499"/>
        <dbReference type="ChEBI" id="CHEBI:29917"/>
        <dbReference type="ChEBI" id="CHEBI:29961"/>
        <dbReference type="ChEBI" id="CHEBI:57844"/>
        <dbReference type="ChEBI" id="CHEBI:57856"/>
        <dbReference type="ChEBI" id="CHEBI:59789"/>
        <dbReference type="ChEBI" id="CHEBI:64428"/>
        <dbReference type="ChEBI" id="CHEBI:73599"/>
        <dbReference type="EC" id="2.8.4.4"/>
    </reaction>
</comment>
<comment type="cofactor">
    <cofactor evidence="1">
        <name>[4Fe-4S] cluster</name>
        <dbReference type="ChEBI" id="CHEBI:49883"/>
    </cofactor>
    <text evidence="1">Binds 2 [4Fe-4S] clusters. One cluster is coordinated with 3 cysteines and an exchangeable S-adenosyl-L-methionine.</text>
</comment>
<comment type="subcellular location">
    <subcellularLocation>
        <location evidence="1">Cytoplasm</location>
    </subcellularLocation>
</comment>
<comment type="similarity">
    <text evidence="1">Belongs to the methylthiotransferase family. RimO subfamily.</text>
</comment>
<gene>
    <name evidence="1" type="primary">rimO</name>
    <name type="ordered locus">TM1040_0649</name>
</gene>
<organism>
    <name type="scientific">Ruegeria sp. (strain TM1040)</name>
    <name type="common">Silicibacter sp.</name>
    <dbReference type="NCBI Taxonomy" id="292414"/>
    <lineage>
        <taxon>Bacteria</taxon>
        <taxon>Pseudomonadati</taxon>
        <taxon>Pseudomonadota</taxon>
        <taxon>Alphaproteobacteria</taxon>
        <taxon>Rhodobacterales</taxon>
        <taxon>Roseobacteraceae</taxon>
        <taxon>Ruegeria</taxon>
    </lineage>
</organism>
<protein>
    <recommendedName>
        <fullName evidence="1">Ribosomal protein uS12 methylthiotransferase RimO</fullName>
        <shortName evidence="1">uS12 MTTase</shortName>
        <shortName evidence="1">uS12 methylthiotransferase</shortName>
        <ecNumber evidence="1">2.8.4.4</ecNumber>
    </recommendedName>
    <alternativeName>
        <fullName evidence="1">Ribosomal protein uS12 (aspartate-C(3))-methylthiotransferase</fullName>
    </alternativeName>
    <alternativeName>
        <fullName evidence="1">Ribosome maturation factor RimO</fullName>
    </alternativeName>
</protein>
<reference key="1">
    <citation type="submission" date="2006-05" db="EMBL/GenBank/DDBJ databases">
        <title>Complete sequence of chromosome of Silicibacter sp. TM1040.</title>
        <authorList>
            <consortium name="US DOE Joint Genome Institute"/>
            <person name="Copeland A."/>
            <person name="Lucas S."/>
            <person name="Lapidus A."/>
            <person name="Barry K."/>
            <person name="Detter J.C."/>
            <person name="Glavina del Rio T."/>
            <person name="Hammon N."/>
            <person name="Israni S."/>
            <person name="Dalin E."/>
            <person name="Tice H."/>
            <person name="Pitluck S."/>
            <person name="Brettin T."/>
            <person name="Bruce D."/>
            <person name="Han C."/>
            <person name="Tapia R."/>
            <person name="Goodwin L."/>
            <person name="Thompson L.S."/>
            <person name="Gilna P."/>
            <person name="Schmutz J."/>
            <person name="Larimer F."/>
            <person name="Land M."/>
            <person name="Hauser L."/>
            <person name="Kyrpides N."/>
            <person name="Kim E."/>
            <person name="Belas R."/>
            <person name="Moran M.A."/>
            <person name="Buchan A."/>
            <person name="Gonzalez J.M."/>
            <person name="Schell M.A."/>
            <person name="Sun F."/>
            <person name="Richardson P."/>
        </authorList>
    </citation>
    <scope>NUCLEOTIDE SEQUENCE [LARGE SCALE GENOMIC DNA]</scope>
    <source>
        <strain>TM1040</strain>
    </source>
</reference>
<dbReference type="EC" id="2.8.4.4" evidence="1"/>
<dbReference type="EMBL" id="CP000377">
    <property type="protein sequence ID" value="ABF63382.1"/>
    <property type="molecule type" value="Genomic_DNA"/>
</dbReference>
<dbReference type="RefSeq" id="WP_011537994.1">
    <property type="nucleotide sequence ID" value="NC_008044.1"/>
</dbReference>
<dbReference type="SMR" id="Q1GIY4"/>
<dbReference type="STRING" id="292414.TM1040_0649"/>
<dbReference type="KEGG" id="sit:TM1040_0649"/>
<dbReference type="eggNOG" id="COG0621">
    <property type="taxonomic scope" value="Bacteria"/>
</dbReference>
<dbReference type="HOGENOM" id="CLU_018697_0_0_5"/>
<dbReference type="OrthoDB" id="9805215at2"/>
<dbReference type="Proteomes" id="UP000000636">
    <property type="component" value="Chromosome"/>
</dbReference>
<dbReference type="GO" id="GO:0005829">
    <property type="term" value="C:cytosol"/>
    <property type="evidence" value="ECO:0007669"/>
    <property type="project" value="TreeGrafter"/>
</dbReference>
<dbReference type="GO" id="GO:0051539">
    <property type="term" value="F:4 iron, 4 sulfur cluster binding"/>
    <property type="evidence" value="ECO:0007669"/>
    <property type="project" value="UniProtKB-UniRule"/>
</dbReference>
<dbReference type="GO" id="GO:0035599">
    <property type="term" value="F:aspartic acid methylthiotransferase activity"/>
    <property type="evidence" value="ECO:0007669"/>
    <property type="project" value="TreeGrafter"/>
</dbReference>
<dbReference type="GO" id="GO:0046872">
    <property type="term" value="F:metal ion binding"/>
    <property type="evidence" value="ECO:0007669"/>
    <property type="project" value="UniProtKB-KW"/>
</dbReference>
<dbReference type="GO" id="GO:0103039">
    <property type="term" value="F:protein methylthiotransferase activity"/>
    <property type="evidence" value="ECO:0007669"/>
    <property type="project" value="UniProtKB-EC"/>
</dbReference>
<dbReference type="GO" id="GO:0006400">
    <property type="term" value="P:tRNA modification"/>
    <property type="evidence" value="ECO:0007669"/>
    <property type="project" value="InterPro"/>
</dbReference>
<dbReference type="CDD" id="cd01335">
    <property type="entry name" value="Radical_SAM"/>
    <property type="match status" value="1"/>
</dbReference>
<dbReference type="FunFam" id="3.40.50.12160:FF:000002">
    <property type="entry name" value="Ribosomal protein S12 methylthiotransferase RimO"/>
    <property type="match status" value="1"/>
</dbReference>
<dbReference type="FunFam" id="3.80.30.20:FF:000001">
    <property type="entry name" value="tRNA-2-methylthio-N(6)-dimethylallyladenosine synthase 2"/>
    <property type="match status" value="1"/>
</dbReference>
<dbReference type="Gene3D" id="3.40.50.12160">
    <property type="entry name" value="Methylthiotransferase, N-terminal domain"/>
    <property type="match status" value="1"/>
</dbReference>
<dbReference type="Gene3D" id="2.40.50.140">
    <property type="entry name" value="Nucleic acid-binding proteins"/>
    <property type="match status" value="1"/>
</dbReference>
<dbReference type="Gene3D" id="3.80.30.20">
    <property type="entry name" value="tm_1862 like domain"/>
    <property type="match status" value="1"/>
</dbReference>
<dbReference type="HAMAP" id="MF_01865">
    <property type="entry name" value="MTTase_RimO"/>
    <property type="match status" value="1"/>
</dbReference>
<dbReference type="InterPro" id="IPR006638">
    <property type="entry name" value="Elp3/MiaA/NifB-like_rSAM"/>
</dbReference>
<dbReference type="InterPro" id="IPR005839">
    <property type="entry name" value="Methylthiotransferase"/>
</dbReference>
<dbReference type="InterPro" id="IPR013848">
    <property type="entry name" value="Methylthiotransferase_N"/>
</dbReference>
<dbReference type="InterPro" id="IPR038135">
    <property type="entry name" value="Methylthiotransferase_N_sf"/>
</dbReference>
<dbReference type="InterPro" id="IPR012340">
    <property type="entry name" value="NA-bd_OB-fold"/>
</dbReference>
<dbReference type="InterPro" id="IPR005840">
    <property type="entry name" value="Ribosomal_uS12_MeSTrfase_RimO"/>
</dbReference>
<dbReference type="InterPro" id="IPR007197">
    <property type="entry name" value="rSAM"/>
</dbReference>
<dbReference type="InterPro" id="IPR023404">
    <property type="entry name" value="rSAM_horseshoe"/>
</dbReference>
<dbReference type="InterPro" id="IPR002792">
    <property type="entry name" value="TRAM_dom"/>
</dbReference>
<dbReference type="NCBIfam" id="TIGR01125">
    <property type="entry name" value="30S ribosomal protein S12 methylthiotransferase RimO"/>
    <property type="match status" value="1"/>
</dbReference>
<dbReference type="NCBIfam" id="TIGR00089">
    <property type="entry name" value="MiaB/RimO family radical SAM methylthiotransferase"/>
    <property type="match status" value="1"/>
</dbReference>
<dbReference type="PANTHER" id="PTHR43837">
    <property type="entry name" value="RIBOSOMAL PROTEIN S12 METHYLTHIOTRANSFERASE RIMO"/>
    <property type="match status" value="1"/>
</dbReference>
<dbReference type="PANTHER" id="PTHR43837:SF1">
    <property type="entry name" value="RIBOSOMAL PROTEIN US12 METHYLTHIOTRANSFERASE RIMO"/>
    <property type="match status" value="1"/>
</dbReference>
<dbReference type="Pfam" id="PF04055">
    <property type="entry name" value="Radical_SAM"/>
    <property type="match status" value="1"/>
</dbReference>
<dbReference type="Pfam" id="PF18693">
    <property type="entry name" value="TRAM_2"/>
    <property type="match status" value="1"/>
</dbReference>
<dbReference type="Pfam" id="PF00919">
    <property type="entry name" value="UPF0004"/>
    <property type="match status" value="1"/>
</dbReference>
<dbReference type="SFLD" id="SFLDG01082">
    <property type="entry name" value="B12-binding_domain_containing"/>
    <property type="match status" value="1"/>
</dbReference>
<dbReference type="SFLD" id="SFLDS00029">
    <property type="entry name" value="Radical_SAM"/>
    <property type="match status" value="1"/>
</dbReference>
<dbReference type="SFLD" id="SFLDF00274">
    <property type="entry name" value="ribosomal_protein_S12_methylth"/>
    <property type="match status" value="1"/>
</dbReference>
<dbReference type="SMART" id="SM00729">
    <property type="entry name" value="Elp3"/>
    <property type="match status" value="1"/>
</dbReference>
<dbReference type="SUPFAM" id="SSF102114">
    <property type="entry name" value="Radical SAM enzymes"/>
    <property type="match status" value="1"/>
</dbReference>
<dbReference type="PROSITE" id="PS51449">
    <property type="entry name" value="MTTASE_N"/>
    <property type="match status" value="1"/>
</dbReference>
<dbReference type="PROSITE" id="PS51918">
    <property type="entry name" value="RADICAL_SAM"/>
    <property type="match status" value="1"/>
</dbReference>
<dbReference type="PROSITE" id="PS50926">
    <property type="entry name" value="TRAM"/>
    <property type="match status" value="1"/>
</dbReference>
<feature type="chain" id="PRO_0000375015" description="Ribosomal protein uS12 methylthiotransferase RimO">
    <location>
        <begin position="1"/>
        <end position="467"/>
    </location>
</feature>
<feature type="domain" description="MTTase N-terminal" evidence="1">
    <location>
        <begin position="27"/>
        <end position="137"/>
    </location>
</feature>
<feature type="domain" description="Radical SAM core" evidence="2">
    <location>
        <begin position="154"/>
        <end position="397"/>
    </location>
</feature>
<feature type="domain" description="TRAM" evidence="1">
    <location>
        <begin position="400"/>
        <end position="467"/>
    </location>
</feature>
<feature type="region of interest" description="Disordered" evidence="3">
    <location>
        <begin position="1"/>
        <end position="27"/>
    </location>
</feature>
<feature type="binding site" evidence="1">
    <location>
        <position position="36"/>
    </location>
    <ligand>
        <name>[4Fe-4S] cluster</name>
        <dbReference type="ChEBI" id="CHEBI:49883"/>
        <label>1</label>
    </ligand>
</feature>
<feature type="binding site" evidence="1">
    <location>
        <position position="72"/>
    </location>
    <ligand>
        <name>[4Fe-4S] cluster</name>
        <dbReference type="ChEBI" id="CHEBI:49883"/>
        <label>1</label>
    </ligand>
</feature>
<feature type="binding site" evidence="1">
    <location>
        <position position="101"/>
    </location>
    <ligand>
        <name>[4Fe-4S] cluster</name>
        <dbReference type="ChEBI" id="CHEBI:49883"/>
        <label>1</label>
    </ligand>
</feature>
<feature type="binding site" evidence="1">
    <location>
        <position position="168"/>
    </location>
    <ligand>
        <name>[4Fe-4S] cluster</name>
        <dbReference type="ChEBI" id="CHEBI:49883"/>
        <label>2</label>
        <note>4Fe-4S-S-AdoMet</note>
    </ligand>
</feature>
<feature type="binding site" evidence="1">
    <location>
        <position position="172"/>
    </location>
    <ligand>
        <name>[4Fe-4S] cluster</name>
        <dbReference type="ChEBI" id="CHEBI:49883"/>
        <label>2</label>
        <note>4Fe-4S-S-AdoMet</note>
    </ligand>
</feature>
<feature type="binding site" evidence="1">
    <location>
        <position position="175"/>
    </location>
    <ligand>
        <name>[4Fe-4S] cluster</name>
        <dbReference type="ChEBI" id="CHEBI:49883"/>
        <label>2</label>
        <note>4Fe-4S-S-AdoMet</note>
    </ligand>
</feature>